<comment type="function">
    <text evidence="4">Catalyzes the condensation of para-aminobenzoate (pABA) with 6-hydroxymethyl-7,8-dihydropterin diphosphate (DHPt-PP) to form 7,8-dihydropteroate, the immediate precursor of folate derivatives.</text>
</comment>
<comment type="catalytic activity">
    <reaction evidence="4">
        <text>(7,8-dihydropterin-6-yl)methyl diphosphate + 4-aminobenzoate = 7,8-dihydropteroate + diphosphate</text>
        <dbReference type="Rhea" id="RHEA:19949"/>
        <dbReference type="ChEBI" id="CHEBI:17836"/>
        <dbReference type="ChEBI" id="CHEBI:17839"/>
        <dbReference type="ChEBI" id="CHEBI:33019"/>
        <dbReference type="ChEBI" id="CHEBI:72950"/>
        <dbReference type="EC" id="2.5.1.15"/>
    </reaction>
</comment>
<comment type="cofactor">
    <cofactor evidence="1">
        <name>Mg(2+)</name>
        <dbReference type="ChEBI" id="CHEBI:18420"/>
    </cofactor>
</comment>
<comment type="activity regulation">
    <text evidence="4">Is potently inhibited by the sulfone dapsone and the two sulfonamides sulfamethoxazole and sulfamethoxypyridazine, with Kis in the range of 12 to 32 nM. To a lesser extent, is also inhibited by p-aminosalicylate (PAS).</text>
</comment>
<comment type="biophysicochemical properties">
    <kinetics>
        <KM evidence="4">0.6 uM for 4-aminobenzoate</KM>
        <KM evidence="4">1.2 uM for 6-hydroxymethyl-7,8-dihydropterin diphosphate</KM>
        <text evidence="4">kcat is 10.6 min(-1).</text>
    </kinetics>
    <phDependence>
        <text evidence="4">Optimum pH is 9.</text>
    </phDependence>
</comment>
<comment type="pathway">
    <text evidence="7">Cofactor biosynthesis; tetrahydrofolate biosynthesis; 7,8-dihydrofolate from 2-amino-4-hydroxy-6-hydroxymethyl-7,8-dihydropteridine diphosphate and 4-aminobenzoate: step 1/2.</text>
</comment>
<comment type="subunit">
    <text evidence="4">Homodimer.</text>
</comment>
<comment type="similarity">
    <text evidence="6">Belongs to the DHPS family.</text>
</comment>
<accession>P0C0X1</accession>
<accession>O69530</accession>
<accession>P46812</accession>
<accession>Q9R2Q6</accession>
<accession>Q9R2U9</accession>
<accession>Q9S0T0</accession>
<organism>
    <name type="scientific">Mycobacterium leprae (strain TN)</name>
    <dbReference type="NCBI Taxonomy" id="272631"/>
    <lineage>
        <taxon>Bacteria</taxon>
        <taxon>Bacillati</taxon>
        <taxon>Actinomycetota</taxon>
        <taxon>Actinomycetes</taxon>
        <taxon>Mycobacteriales</taxon>
        <taxon>Mycobacteriaceae</taxon>
        <taxon>Mycobacterium</taxon>
    </lineage>
</organism>
<reference key="1">
    <citation type="journal article" date="1999" name="FEMS Microbiol. Lett.">
        <title>Diaminodiphenylsulfone resistance of Mycobacterium leprae due to mutations in the dihydropteroate synthase gene.</title>
        <authorList>
            <person name="Kai M."/>
            <person name="Matsuoka M."/>
            <person name="Nakata N."/>
            <person name="Maeda S."/>
            <person name="Gidoh M."/>
            <person name="Maeda Y."/>
            <person name="Hashimoto K."/>
            <person name="Kobayashi K."/>
            <person name="Kashiwabara Y."/>
        </authorList>
    </citation>
    <scope>NUCLEOTIDE SEQUENCE [GENOMIC DNA]</scope>
</reference>
<reference key="2">
    <citation type="journal article" date="1999" name="J. Bacteriol.">
        <title>Cloning and expression of Mycobacterium tuberculosis and Mycobacterium leprae dihydropteroate synthase in Escherichia coli.</title>
        <authorList>
            <person name="Nopponpunth V."/>
            <person name="Sirawaraporn W."/>
            <person name="Greene P.J."/>
            <person name="Santi D.V."/>
        </authorList>
    </citation>
    <scope>NUCLEOTIDE SEQUENCE [GENOMIC DNA]</scope>
    <scope>FUNCTION</scope>
    <scope>CATALYTIC ACTIVITY</scope>
    <scope>BIOPHYSICOCHEMICAL PROPERTIES</scope>
    <scope>ACTIVITY REGULATION</scope>
    <scope>SUBUNIT</scope>
</reference>
<reference key="3">
    <citation type="journal article" date="2001" name="Nature">
        <title>Massive gene decay in the leprosy bacillus.</title>
        <authorList>
            <person name="Cole S.T."/>
            <person name="Eiglmeier K."/>
            <person name="Parkhill J."/>
            <person name="James K.D."/>
            <person name="Thomson N.R."/>
            <person name="Wheeler P.R."/>
            <person name="Honore N."/>
            <person name="Garnier T."/>
            <person name="Churcher C.M."/>
            <person name="Harris D.E."/>
            <person name="Mungall K.L."/>
            <person name="Basham D."/>
            <person name="Brown D."/>
            <person name="Chillingworth T."/>
            <person name="Connor R."/>
            <person name="Davies R.M."/>
            <person name="Devlin K."/>
            <person name="Duthoy S."/>
            <person name="Feltwell T."/>
            <person name="Fraser A."/>
            <person name="Hamlin N."/>
            <person name="Holroyd S."/>
            <person name="Hornsby T."/>
            <person name="Jagels K."/>
            <person name="Lacroix C."/>
            <person name="Maclean J."/>
            <person name="Moule S."/>
            <person name="Murphy L.D."/>
            <person name="Oliver K."/>
            <person name="Quail M.A."/>
            <person name="Rajandream M.A."/>
            <person name="Rutherford K.M."/>
            <person name="Rutter S."/>
            <person name="Seeger K."/>
            <person name="Simon S."/>
            <person name="Simmonds M."/>
            <person name="Skelton J."/>
            <person name="Squares R."/>
            <person name="Squares S."/>
            <person name="Stevens K."/>
            <person name="Taylor K."/>
            <person name="Whitehead S."/>
            <person name="Woodward J.R."/>
            <person name="Barrell B.G."/>
        </authorList>
    </citation>
    <scope>NUCLEOTIDE SEQUENCE [LARGE SCALE GENOMIC DNA]</scope>
    <source>
        <strain>TN</strain>
    </source>
</reference>
<feature type="chain" id="PRO_0000168213" description="Dihydropteroate synthase">
    <location>
        <begin position="1"/>
        <end position="284"/>
    </location>
</feature>
<feature type="domain" description="Pterin-binding" evidence="3">
    <location>
        <begin position="6"/>
        <end position="265"/>
    </location>
</feature>
<feature type="binding site" evidence="2">
    <location>
        <position position="13"/>
    </location>
    <ligand>
        <name>Mg(2+)</name>
        <dbReference type="ChEBI" id="CHEBI:18420"/>
    </ligand>
</feature>
<feature type="binding site" evidence="1">
    <location>
        <position position="53"/>
    </location>
    <ligand>
        <name>(7,8-dihydropterin-6-yl)methyl diphosphate</name>
        <dbReference type="ChEBI" id="CHEBI:72950"/>
    </ligand>
</feature>
<feature type="binding site" evidence="1">
    <location>
        <position position="86"/>
    </location>
    <ligand>
        <name>(7,8-dihydropterin-6-yl)methyl diphosphate</name>
        <dbReference type="ChEBI" id="CHEBI:72950"/>
    </ligand>
</feature>
<feature type="binding site" evidence="1">
    <location>
        <position position="105"/>
    </location>
    <ligand>
        <name>(7,8-dihydropterin-6-yl)methyl diphosphate</name>
        <dbReference type="ChEBI" id="CHEBI:72950"/>
    </ligand>
</feature>
<feature type="binding site" evidence="1">
    <location>
        <position position="177"/>
    </location>
    <ligand>
        <name>(7,8-dihydropterin-6-yl)methyl diphosphate</name>
        <dbReference type="ChEBI" id="CHEBI:72950"/>
    </ligand>
</feature>
<feature type="binding site" evidence="1">
    <location>
        <position position="213"/>
    </location>
    <ligand>
        <name>(7,8-dihydropterin-6-yl)methyl diphosphate</name>
        <dbReference type="ChEBI" id="CHEBI:72950"/>
    </ligand>
</feature>
<feature type="binding site" evidence="1">
    <location>
        <begin position="253"/>
        <end position="255"/>
    </location>
    <ligand>
        <name>(7,8-dihydropterin-6-yl)methyl diphosphate</name>
        <dbReference type="ChEBI" id="CHEBI:72950"/>
    </ligand>
</feature>
<feature type="sequence conflict" description="In Ref. 1; BAA84081." evidence="6" ref="1">
    <original>T</original>
    <variation>A</variation>
    <location>
        <position position="53"/>
    </location>
</feature>
<feature type="sequence conflict" description="In Ref. 1; BAA84080/BAA84079." evidence="6" ref="1">
    <original>T</original>
    <variation>I</variation>
    <location>
        <position position="53"/>
    </location>
</feature>
<feature type="sequence conflict" description="In Ref. 1; BAA84078/BAA84077/BAA84076." evidence="6" ref="1">
    <original>P</original>
    <variation>L</variation>
    <location>
        <position position="55"/>
    </location>
</feature>
<dbReference type="EC" id="2.5.1.15" evidence="4"/>
<dbReference type="EMBL" id="AB028658">
    <property type="protein sequence ID" value="BAA84076.1"/>
    <property type="molecule type" value="Genomic_DNA"/>
</dbReference>
<dbReference type="EMBL" id="AB028659">
    <property type="protein sequence ID" value="BAA84077.1"/>
    <property type="molecule type" value="Genomic_DNA"/>
</dbReference>
<dbReference type="EMBL" id="AB028660">
    <property type="protein sequence ID" value="BAA84078.1"/>
    <property type="molecule type" value="Genomic_DNA"/>
</dbReference>
<dbReference type="EMBL" id="AB028661">
    <property type="protein sequence ID" value="BAA84079.1"/>
    <property type="molecule type" value="Genomic_DNA"/>
</dbReference>
<dbReference type="EMBL" id="AB028662">
    <property type="protein sequence ID" value="BAA84080.1"/>
    <property type="molecule type" value="Genomic_DNA"/>
</dbReference>
<dbReference type="EMBL" id="AB028663">
    <property type="protein sequence ID" value="BAA84081.1"/>
    <property type="molecule type" value="Genomic_DNA"/>
</dbReference>
<dbReference type="EMBL" id="AB028656">
    <property type="protein sequence ID" value="BAA84074.1"/>
    <property type="molecule type" value="Genomic_DNA"/>
</dbReference>
<dbReference type="EMBL" id="AB028657">
    <property type="protein sequence ID" value="BAA84075.1"/>
    <property type="molecule type" value="Genomic_DNA"/>
</dbReference>
<dbReference type="EMBL" id="AF117618">
    <property type="protein sequence ID" value="AAF06725.1"/>
    <property type="molecule type" value="Genomic_DNA"/>
</dbReference>
<dbReference type="EMBL" id="AL023093">
    <property type="protein sequence ID" value="CAA18794.1"/>
    <property type="molecule type" value="Genomic_DNA"/>
</dbReference>
<dbReference type="EMBL" id="AL583917">
    <property type="protein sequence ID" value="CAC29732.1"/>
    <property type="molecule type" value="Genomic_DNA"/>
</dbReference>
<dbReference type="PIR" id="H86936">
    <property type="entry name" value="H86936"/>
</dbReference>
<dbReference type="RefSeq" id="NP_301284.1">
    <property type="nucleotide sequence ID" value="NC_002677.1"/>
</dbReference>
<dbReference type="RefSeq" id="WP_010907608.1">
    <property type="nucleotide sequence ID" value="NC_002677.1"/>
</dbReference>
<dbReference type="SMR" id="P0C0X1"/>
<dbReference type="STRING" id="272631.gene:17574041"/>
<dbReference type="ChEMBL" id="CHEMBL2362993"/>
<dbReference type="DrugBank" id="DB00250">
    <property type="generic name" value="Dapsone"/>
</dbReference>
<dbReference type="DrugCentral" id="P0C0X1"/>
<dbReference type="KEGG" id="mle:ML0224"/>
<dbReference type="PATRIC" id="fig|272631.5.peg.356"/>
<dbReference type="Leproma" id="ML0224"/>
<dbReference type="eggNOG" id="COG0294">
    <property type="taxonomic scope" value="Bacteria"/>
</dbReference>
<dbReference type="HOGENOM" id="CLU_008023_0_1_11"/>
<dbReference type="OrthoDB" id="9811744at2"/>
<dbReference type="BRENDA" id="2.5.1.15">
    <property type="organism ID" value="3504"/>
</dbReference>
<dbReference type="SABIO-RK" id="P0C0X1"/>
<dbReference type="UniPathway" id="UPA00077">
    <property type="reaction ID" value="UER00156"/>
</dbReference>
<dbReference type="PRO" id="PR:P0C0X1"/>
<dbReference type="Proteomes" id="UP000000806">
    <property type="component" value="Chromosome"/>
</dbReference>
<dbReference type="GO" id="GO:0005829">
    <property type="term" value="C:cytosol"/>
    <property type="evidence" value="ECO:0007669"/>
    <property type="project" value="TreeGrafter"/>
</dbReference>
<dbReference type="GO" id="GO:0004156">
    <property type="term" value="F:dihydropteroate synthase activity"/>
    <property type="evidence" value="ECO:0007669"/>
    <property type="project" value="UniProtKB-EC"/>
</dbReference>
<dbReference type="GO" id="GO:0046872">
    <property type="term" value="F:metal ion binding"/>
    <property type="evidence" value="ECO:0007669"/>
    <property type="project" value="UniProtKB-KW"/>
</dbReference>
<dbReference type="GO" id="GO:0046656">
    <property type="term" value="P:folic acid biosynthetic process"/>
    <property type="evidence" value="ECO:0007669"/>
    <property type="project" value="UniProtKB-KW"/>
</dbReference>
<dbReference type="GO" id="GO:0046654">
    <property type="term" value="P:tetrahydrofolate biosynthetic process"/>
    <property type="evidence" value="ECO:0007669"/>
    <property type="project" value="UniProtKB-UniPathway"/>
</dbReference>
<dbReference type="CDD" id="cd00739">
    <property type="entry name" value="DHPS"/>
    <property type="match status" value="1"/>
</dbReference>
<dbReference type="FunFam" id="3.20.20.20:FF:000006">
    <property type="entry name" value="Dihydropteroate synthase"/>
    <property type="match status" value="1"/>
</dbReference>
<dbReference type="Gene3D" id="3.20.20.20">
    <property type="entry name" value="Dihydropteroate synthase-like"/>
    <property type="match status" value="1"/>
</dbReference>
<dbReference type="InterPro" id="IPR045031">
    <property type="entry name" value="DHP_synth-like"/>
</dbReference>
<dbReference type="InterPro" id="IPR006390">
    <property type="entry name" value="DHP_synth_dom"/>
</dbReference>
<dbReference type="InterPro" id="IPR011005">
    <property type="entry name" value="Dihydropteroate_synth-like_sf"/>
</dbReference>
<dbReference type="InterPro" id="IPR000489">
    <property type="entry name" value="Pterin-binding_dom"/>
</dbReference>
<dbReference type="NCBIfam" id="TIGR01496">
    <property type="entry name" value="DHPS"/>
    <property type="match status" value="1"/>
</dbReference>
<dbReference type="PANTHER" id="PTHR20941">
    <property type="entry name" value="FOLATE SYNTHESIS PROTEINS"/>
    <property type="match status" value="1"/>
</dbReference>
<dbReference type="PANTHER" id="PTHR20941:SF1">
    <property type="entry name" value="FOLIC ACID SYNTHESIS PROTEIN FOL1"/>
    <property type="match status" value="1"/>
</dbReference>
<dbReference type="Pfam" id="PF00809">
    <property type="entry name" value="Pterin_bind"/>
    <property type="match status" value="1"/>
</dbReference>
<dbReference type="SUPFAM" id="SSF51717">
    <property type="entry name" value="Dihydropteroate synthetase-like"/>
    <property type="match status" value="1"/>
</dbReference>
<dbReference type="PROSITE" id="PS00792">
    <property type="entry name" value="DHPS_1"/>
    <property type="match status" value="1"/>
</dbReference>
<dbReference type="PROSITE" id="PS00793">
    <property type="entry name" value="DHPS_2"/>
    <property type="match status" value="1"/>
</dbReference>
<dbReference type="PROSITE" id="PS50972">
    <property type="entry name" value="PTERIN_BINDING"/>
    <property type="match status" value="1"/>
</dbReference>
<protein>
    <recommendedName>
        <fullName evidence="5">Dihydropteroate synthase</fullName>
        <shortName evidence="5">DHPS</shortName>
        <ecNumber evidence="4">2.5.1.15</ecNumber>
    </recommendedName>
    <alternativeName>
        <fullName>Dihydropteroate pyrophosphorylase</fullName>
    </alternativeName>
</protein>
<sequence>MSLAPVQVIGVLNVTDNSFSDGGRYLDPDDAVQHGLAMVAEGAAIVDVGGESTRPGAIRTDPRVELSRIVPVVKELAAQGITVSIDTTRADVARAALQSGARIVNDVSGGRADPAMAPLVAEAGVAWVLMHWRLMSAERPYEAPNYRDVVAEVRADLLAGVDQAVAAGVDPGSLVIDPGLGFAKTGQHNWALLNALPELVATGVPILLGASRKRFLGRLLAGADGAVRPPDGRETATAVISALAALHGAWGVRVHDVRASVDALKVVGAWLHAGPQIEKVRCDG</sequence>
<keyword id="KW-0289">Folate biosynthesis</keyword>
<keyword id="KW-0460">Magnesium</keyword>
<keyword id="KW-0479">Metal-binding</keyword>
<keyword id="KW-1185">Reference proteome</keyword>
<keyword id="KW-0808">Transferase</keyword>
<name>DHPS1_MYCLE</name>
<evidence type="ECO:0000250" key="1">
    <source>
        <dbReference type="UniProtKB" id="P0AC13"/>
    </source>
</evidence>
<evidence type="ECO:0000250" key="2">
    <source>
        <dbReference type="UniProtKB" id="P9WND1"/>
    </source>
</evidence>
<evidence type="ECO:0000255" key="3">
    <source>
        <dbReference type="PROSITE-ProRule" id="PRU00334"/>
    </source>
</evidence>
<evidence type="ECO:0000269" key="4">
    <source>
    </source>
</evidence>
<evidence type="ECO:0000303" key="5">
    <source>
    </source>
</evidence>
<evidence type="ECO:0000305" key="6"/>
<evidence type="ECO:0000305" key="7">
    <source>
    </source>
</evidence>
<gene>
    <name type="primary">folP1</name>
    <name type="synonym">folP</name>
    <name type="ordered locus">ML0224</name>
    <name type="ORF">MLCB2548.07c</name>
</gene>
<proteinExistence type="evidence at protein level"/>